<name>NUOH_ACIAD</name>
<gene>
    <name evidence="1" type="primary">nuoH</name>
    <name type="ordered locus">ACIAD0737</name>
</gene>
<dbReference type="EC" id="7.1.1.-" evidence="1"/>
<dbReference type="EMBL" id="CR543861">
    <property type="protein sequence ID" value="CAG67643.1"/>
    <property type="molecule type" value="Genomic_DNA"/>
</dbReference>
<dbReference type="SMR" id="Q6FE65"/>
<dbReference type="STRING" id="202950.GCA_001485005_02493"/>
<dbReference type="KEGG" id="aci:ACIAD0737"/>
<dbReference type="eggNOG" id="COG1005">
    <property type="taxonomic scope" value="Bacteria"/>
</dbReference>
<dbReference type="HOGENOM" id="CLU_015134_0_1_6"/>
<dbReference type="Proteomes" id="UP000000430">
    <property type="component" value="Chromosome"/>
</dbReference>
<dbReference type="GO" id="GO:0005886">
    <property type="term" value="C:plasma membrane"/>
    <property type="evidence" value="ECO:0007669"/>
    <property type="project" value="UniProtKB-SubCell"/>
</dbReference>
<dbReference type="GO" id="GO:0003954">
    <property type="term" value="F:NADH dehydrogenase activity"/>
    <property type="evidence" value="ECO:0007669"/>
    <property type="project" value="TreeGrafter"/>
</dbReference>
<dbReference type="GO" id="GO:0016655">
    <property type="term" value="F:oxidoreductase activity, acting on NAD(P)H, quinone or similar compound as acceptor"/>
    <property type="evidence" value="ECO:0007669"/>
    <property type="project" value="UniProtKB-UniRule"/>
</dbReference>
<dbReference type="GO" id="GO:0048038">
    <property type="term" value="F:quinone binding"/>
    <property type="evidence" value="ECO:0007669"/>
    <property type="project" value="UniProtKB-KW"/>
</dbReference>
<dbReference type="GO" id="GO:0009060">
    <property type="term" value="P:aerobic respiration"/>
    <property type="evidence" value="ECO:0007669"/>
    <property type="project" value="TreeGrafter"/>
</dbReference>
<dbReference type="HAMAP" id="MF_01350">
    <property type="entry name" value="NDH1_NuoH"/>
    <property type="match status" value="1"/>
</dbReference>
<dbReference type="InterPro" id="IPR001694">
    <property type="entry name" value="NADH_UbQ_OxRdtase_su1/FPO"/>
</dbReference>
<dbReference type="InterPro" id="IPR018086">
    <property type="entry name" value="NADH_UbQ_OxRdtase_su1_CS"/>
</dbReference>
<dbReference type="NCBIfam" id="NF004740">
    <property type="entry name" value="PRK06076.1-1"/>
    <property type="match status" value="1"/>
</dbReference>
<dbReference type="NCBIfam" id="NF004741">
    <property type="entry name" value="PRK06076.1-2"/>
    <property type="match status" value="1"/>
</dbReference>
<dbReference type="PANTHER" id="PTHR11432">
    <property type="entry name" value="NADH DEHYDROGENASE SUBUNIT 1"/>
    <property type="match status" value="1"/>
</dbReference>
<dbReference type="PANTHER" id="PTHR11432:SF3">
    <property type="entry name" value="NADH-UBIQUINONE OXIDOREDUCTASE CHAIN 1"/>
    <property type="match status" value="1"/>
</dbReference>
<dbReference type="Pfam" id="PF00146">
    <property type="entry name" value="NADHdh"/>
    <property type="match status" value="1"/>
</dbReference>
<dbReference type="PROSITE" id="PS00667">
    <property type="entry name" value="COMPLEX1_ND1_1"/>
    <property type="match status" value="1"/>
</dbReference>
<dbReference type="PROSITE" id="PS00668">
    <property type="entry name" value="COMPLEX1_ND1_2"/>
    <property type="match status" value="1"/>
</dbReference>
<comment type="function">
    <text evidence="1">NDH-1 shuttles electrons from NADH, via FMN and iron-sulfur (Fe-S) centers, to quinones in the respiratory chain. The immediate electron acceptor for the enzyme in this species is believed to be ubiquinone. Couples the redox reaction to proton translocation (for every two electrons transferred, four hydrogen ions are translocated across the cytoplasmic membrane), and thus conserves the redox energy in a proton gradient. This subunit may bind ubiquinone.</text>
</comment>
<comment type="catalytic activity">
    <reaction evidence="1">
        <text>a quinone + NADH + 5 H(+)(in) = a quinol + NAD(+) + 4 H(+)(out)</text>
        <dbReference type="Rhea" id="RHEA:57888"/>
        <dbReference type="ChEBI" id="CHEBI:15378"/>
        <dbReference type="ChEBI" id="CHEBI:24646"/>
        <dbReference type="ChEBI" id="CHEBI:57540"/>
        <dbReference type="ChEBI" id="CHEBI:57945"/>
        <dbReference type="ChEBI" id="CHEBI:132124"/>
    </reaction>
</comment>
<comment type="subunit">
    <text evidence="1">NDH-1 is composed of 14 different subunits. Subunits NuoA, H, J, K, L, M, N constitute the membrane sector of the complex.</text>
</comment>
<comment type="subcellular location">
    <subcellularLocation>
        <location evidence="1">Cell inner membrane</location>
        <topology evidence="1">Multi-pass membrane protein</topology>
    </subcellularLocation>
</comment>
<comment type="similarity">
    <text evidence="1">Belongs to the complex I subunit 1 family.</text>
</comment>
<keyword id="KW-0997">Cell inner membrane</keyword>
<keyword id="KW-1003">Cell membrane</keyword>
<keyword id="KW-0472">Membrane</keyword>
<keyword id="KW-0520">NAD</keyword>
<keyword id="KW-0874">Quinone</keyword>
<keyword id="KW-1278">Translocase</keyword>
<keyword id="KW-0812">Transmembrane</keyword>
<keyword id="KW-1133">Transmembrane helix</keyword>
<keyword id="KW-0830">Ubiquinone</keyword>
<reference key="1">
    <citation type="journal article" date="2004" name="Nucleic Acids Res.">
        <title>Unique features revealed by the genome sequence of Acinetobacter sp. ADP1, a versatile and naturally transformation competent bacterium.</title>
        <authorList>
            <person name="Barbe V."/>
            <person name="Vallenet D."/>
            <person name="Fonknechten N."/>
            <person name="Kreimeyer A."/>
            <person name="Oztas S."/>
            <person name="Labarre L."/>
            <person name="Cruveiller S."/>
            <person name="Robert C."/>
            <person name="Duprat S."/>
            <person name="Wincker P."/>
            <person name="Ornston L.N."/>
            <person name="Weissenbach J."/>
            <person name="Marliere P."/>
            <person name="Cohen G.N."/>
            <person name="Medigue C."/>
        </authorList>
    </citation>
    <scope>NUCLEOTIDE SEQUENCE [LARGE SCALE GENOMIC DNA]</scope>
    <source>
        <strain>ATCC 33305 / BD413 / ADP1</strain>
    </source>
</reference>
<sequence length="333" mass="37224">MRQTPLWAENWPIAYSVIQAIVILLVVVLVAALMSFIERRLLAWWQDRYGPNRVGPGGMFQIVADMLKIMFKEDWTPKFADKLTFRMAPAVAMATAVLSFIVIPVSPTLGVADMSIGLLFFMAMAGIAVYAVLFGGWASNNKYSLLGGLRSAAQTISYEVFLGISLMGVVAIAGSFNLREIVEAQRDMWFIVPQFLGFMIFVVAGVAVTHRHPFDQPEAEQELAEGYHVEYGGMKWGMFFVAEYVNIVLISALIVTLFFGGWLAPFNLEIPFIPPVFWFIVKTAFFVMMFVLARGALMRPRYDQVMNFGWKVCLPLALVNLMVTGAVILMNQA</sequence>
<feature type="chain" id="PRO_0000244885" description="NADH-quinone oxidoreductase subunit H">
    <location>
        <begin position="1"/>
        <end position="333"/>
    </location>
</feature>
<feature type="transmembrane region" description="Helical" evidence="1">
    <location>
        <begin position="17"/>
        <end position="37"/>
    </location>
</feature>
<feature type="transmembrane region" description="Helical" evidence="1">
    <location>
        <begin position="91"/>
        <end position="111"/>
    </location>
</feature>
<feature type="transmembrane region" description="Helical" evidence="1">
    <location>
        <begin position="116"/>
        <end position="136"/>
    </location>
</feature>
<feature type="transmembrane region" description="Helical" evidence="1">
    <location>
        <begin position="156"/>
        <end position="176"/>
    </location>
</feature>
<feature type="transmembrane region" description="Helical" evidence="1">
    <location>
        <begin position="188"/>
        <end position="208"/>
    </location>
</feature>
<feature type="transmembrane region" description="Helical" evidence="1">
    <location>
        <begin position="244"/>
        <end position="264"/>
    </location>
</feature>
<feature type="transmembrane region" description="Helical" evidence="1">
    <location>
        <begin position="272"/>
        <end position="292"/>
    </location>
</feature>
<feature type="transmembrane region" description="Helical" evidence="1">
    <location>
        <begin position="310"/>
        <end position="330"/>
    </location>
</feature>
<organism>
    <name type="scientific">Acinetobacter baylyi (strain ATCC 33305 / BD413 / ADP1)</name>
    <dbReference type="NCBI Taxonomy" id="62977"/>
    <lineage>
        <taxon>Bacteria</taxon>
        <taxon>Pseudomonadati</taxon>
        <taxon>Pseudomonadota</taxon>
        <taxon>Gammaproteobacteria</taxon>
        <taxon>Moraxellales</taxon>
        <taxon>Moraxellaceae</taxon>
        <taxon>Acinetobacter</taxon>
    </lineage>
</organism>
<accession>Q6FE65</accession>
<protein>
    <recommendedName>
        <fullName evidence="1">NADH-quinone oxidoreductase subunit H</fullName>
        <ecNumber evidence="1">7.1.1.-</ecNumber>
    </recommendedName>
    <alternativeName>
        <fullName evidence="1">NADH dehydrogenase I subunit H</fullName>
    </alternativeName>
    <alternativeName>
        <fullName evidence="1">NDH-1 subunit H</fullName>
    </alternativeName>
</protein>
<evidence type="ECO:0000255" key="1">
    <source>
        <dbReference type="HAMAP-Rule" id="MF_01350"/>
    </source>
</evidence>
<proteinExistence type="inferred from homology"/>